<protein>
    <recommendedName>
        <fullName evidence="1">Cell division protein FtsA</fullName>
    </recommendedName>
</protein>
<organism>
    <name type="scientific">Escherichia coli (strain K12)</name>
    <dbReference type="NCBI Taxonomy" id="83333"/>
    <lineage>
        <taxon>Bacteria</taxon>
        <taxon>Pseudomonadati</taxon>
        <taxon>Pseudomonadota</taxon>
        <taxon>Gammaproteobacteria</taxon>
        <taxon>Enterobacterales</taxon>
        <taxon>Enterobacteriaceae</taxon>
        <taxon>Escherichia</taxon>
    </lineage>
</organism>
<sequence length="420" mass="45330">MIKATDRKLVVGLEIGTAKVAALVGEVLPDGMVNIIGVGSCPSRGMDKGGVNDLESVVKCVQRAIDQAELMADCQISSVYLALSGKHISCQNEIGMVPISEEEVTQEDVENVVHTAKSVRVRDEHRVLHVIPQEYAIDYQEGIKNPVGLSGVRMQAKVHLITCHNDMAKNIVKAVERCGLKVDQLIFAGLASSYSVLTEDERELGVCVVDIGGGTMDIAVYTGGALRHTKVIPYAGNVVTSDIAYAFGTPPSDAEAIKVRHGCALGSIVGKDESVEVPSVGGRPPRSLQRQTLAEVIEPRYTELLNLVNEEILQLQEKLRQQGVKHHLAAGIVLTGGAAQIEGLAACAQRVFHTQVRIGAPLNITGLTDYAQEPYYSTAVGLLHYGKESHLNGEAEVEKRVTASVGSWIKRLNSWLRKEF</sequence>
<name>FTSA_ECOLI</name>
<dbReference type="EMBL" id="K02668">
    <property type="protein sequence ID" value="AAA23817.1"/>
    <property type="molecule type" value="Genomic_DNA"/>
</dbReference>
<dbReference type="EMBL" id="M36531">
    <property type="protein sequence ID" value="AAA23811.1"/>
    <property type="molecule type" value="Genomic_DNA"/>
</dbReference>
<dbReference type="EMBL" id="X55034">
    <property type="protein sequence ID" value="CAA38871.1"/>
    <property type="molecule type" value="Genomic_DNA"/>
</dbReference>
<dbReference type="EMBL" id="U00096">
    <property type="protein sequence ID" value="AAC73205.1"/>
    <property type="molecule type" value="Genomic_DNA"/>
</dbReference>
<dbReference type="EMBL" id="AP009048">
    <property type="protein sequence ID" value="BAB96662.1"/>
    <property type="molecule type" value="Genomic_DNA"/>
</dbReference>
<dbReference type="PIR" id="B23318">
    <property type="entry name" value="CEECA"/>
</dbReference>
<dbReference type="RefSeq" id="NP_414636.1">
    <property type="nucleotide sequence ID" value="NC_000913.3"/>
</dbReference>
<dbReference type="RefSeq" id="WP_000588474.1">
    <property type="nucleotide sequence ID" value="NZ_STEB01000010.1"/>
</dbReference>
<dbReference type="PDB" id="7Q6D">
    <property type="method" value="X-ray"/>
    <property type="resolution" value="2.80 A"/>
    <property type="chains" value="A=1-405"/>
</dbReference>
<dbReference type="PDBsum" id="7Q6D"/>
<dbReference type="SMR" id="P0ABH0"/>
<dbReference type="BioGRID" id="4261886">
    <property type="interactions" value="382"/>
</dbReference>
<dbReference type="BioGRID" id="849180">
    <property type="interactions" value="1"/>
</dbReference>
<dbReference type="ComplexPortal" id="CPX-1936">
    <property type="entry name" value="Divisome complex"/>
</dbReference>
<dbReference type="DIP" id="DIP-47983N"/>
<dbReference type="FunCoup" id="P0ABH0">
    <property type="interactions" value="274"/>
</dbReference>
<dbReference type="IntAct" id="P0ABH0">
    <property type="interactions" value="27"/>
</dbReference>
<dbReference type="MINT" id="P0ABH0"/>
<dbReference type="STRING" id="511145.b0094"/>
<dbReference type="ChEMBL" id="CHEMBL3309010"/>
<dbReference type="jPOST" id="P0ABH0"/>
<dbReference type="PaxDb" id="511145-b0094"/>
<dbReference type="EnsemblBacteria" id="AAC73205">
    <property type="protein sequence ID" value="AAC73205"/>
    <property type="gene ID" value="b0094"/>
</dbReference>
<dbReference type="GeneID" id="93777340"/>
<dbReference type="GeneID" id="944778"/>
<dbReference type="KEGG" id="ecj:JW0092"/>
<dbReference type="KEGG" id="eco:b0094"/>
<dbReference type="KEGG" id="ecoc:C3026_00375"/>
<dbReference type="PATRIC" id="fig|1411691.4.peg.2186"/>
<dbReference type="EchoBASE" id="EB0335"/>
<dbReference type="eggNOG" id="COG0849">
    <property type="taxonomic scope" value="Bacteria"/>
</dbReference>
<dbReference type="HOGENOM" id="CLU_037850_3_2_6"/>
<dbReference type="InParanoid" id="P0ABH0"/>
<dbReference type="OMA" id="RLEANFH"/>
<dbReference type="OrthoDB" id="9810567at2"/>
<dbReference type="PhylomeDB" id="P0ABH0"/>
<dbReference type="BioCyc" id="EcoCyc:EG10339-MONOMER"/>
<dbReference type="PRO" id="PR:P0ABH0"/>
<dbReference type="Proteomes" id="UP000000625">
    <property type="component" value="Chromosome"/>
</dbReference>
<dbReference type="GO" id="GO:0032153">
    <property type="term" value="C:cell division site"/>
    <property type="evidence" value="ECO:0000314"/>
    <property type="project" value="EcoliWiki"/>
</dbReference>
<dbReference type="GO" id="GO:0009898">
    <property type="term" value="C:cytoplasmic side of plasma membrane"/>
    <property type="evidence" value="ECO:0000314"/>
    <property type="project" value="EcoCyc"/>
</dbReference>
<dbReference type="GO" id="GO:0005829">
    <property type="term" value="C:cytosol"/>
    <property type="evidence" value="ECO:0000314"/>
    <property type="project" value="EcoCyc"/>
</dbReference>
<dbReference type="GO" id="GO:1990586">
    <property type="term" value="C:divisome complex"/>
    <property type="evidence" value="ECO:0000303"/>
    <property type="project" value="ComplexPortal"/>
</dbReference>
<dbReference type="GO" id="GO:0005886">
    <property type="term" value="C:plasma membrane"/>
    <property type="evidence" value="ECO:0000303"/>
    <property type="project" value="ComplexPortal"/>
</dbReference>
<dbReference type="GO" id="GO:0005524">
    <property type="term" value="F:ATP binding"/>
    <property type="evidence" value="ECO:0000314"/>
    <property type="project" value="EcoCyc"/>
</dbReference>
<dbReference type="GO" id="GO:0042802">
    <property type="term" value="F:identical protein binding"/>
    <property type="evidence" value="ECO:0000315"/>
    <property type="project" value="EcoCyc"/>
</dbReference>
<dbReference type="GO" id="GO:0051301">
    <property type="term" value="P:cell division"/>
    <property type="evidence" value="ECO:0000315"/>
    <property type="project" value="EcoliWiki"/>
</dbReference>
<dbReference type="GO" id="GO:0000917">
    <property type="term" value="P:division septum assembly"/>
    <property type="evidence" value="ECO:0000303"/>
    <property type="project" value="ComplexPortal"/>
</dbReference>
<dbReference type="GO" id="GO:0043093">
    <property type="term" value="P:FtsZ-dependent cytokinesis"/>
    <property type="evidence" value="ECO:0000303"/>
    <property type="project" value="ComplexPortal"/>
</dbReference>
<dbReference type="CDD" id="cd24048">
    <property type="entry name" value="ASKHA_NBD_FtsA"/>
    <property type="match status" value="1"/>
</dbReference>
<dbReference type="FunFam" id="3.30.1490.110:FF:000001">
    <property type="entry name" value="Cell division protein FtsA"/>
    <property type="match status" value="1"/>
</dbReference>
<dbReference type="FunFam" id="3.30.420.40:FF:000030">
    <property type="entry name" value="Cell division protein FtsA"/>
    <property type="match status" value="1"/>
</dbReference>
<dbReference type="Gene3D" id="3.30.1490.110">
    <property type="match status" value="1"/>
</dbReference>
<dbReference type="Gene3D" id="3.30.420.40">
    <property type="match status" value="1"/>
</dbReference>
<dbReference type="HAMAP" id="MF_02033">
    <property type="entry name" value="FtsA"/>
    <property type="match status" value="1"/>
</dbReference>
<dbReference type="InterPro" id="IPR043129">
    <property type="entry name" value="ATPase_NBD"/>
</dbReference>
<dbReference type="InterPro" id="IPR020823">
    <property type="entry name" value="Cell_div_FtsA"/>
</dbReference>
<dbReference type="InterPro" id="IPR050696">
    <property type="entry name" value="FtsA/MreB"/>
</dbReference>
<dbReference type="InterPro" id="IPR003494">
    <property type="entry name" value="SHS2_FtsA"/>
</dbReference>
<dbReference type="NCBIfam" id="TIGR01174">
    <property type="entry name" value="ftsA"/>
    <property type="match status" value="1"/>
</dbReference>
<dbReference type="NCBIfam" id="NF007009">
    <property type="entry name" value="PRK09472.1"/>
    <property type="match status" value="1"/>
</dbReference>
<dbReference type="PANTHER" id="PTHR32432:SF4">
    <property type="entry name" value="CELL DIVISION PROTEIN FTSA"/>
    <property type="match status" value="1"/>
</dbReference>
<dbReference type="PANTHER" id="PTHR32432">
    <property type="entry name" value="CELL DIVISION PROTEIN FTSA-RELATED"/>
    <property type="match status" value="1"/>
</dbReference>
<dbReference type="Pfam" id="PF14450">
    <property type="entry name" value="FtsA"/>
    <property type="match status" value="1"/>
</dbReference>
<dbReference type="Pfam" id="PF02491">
    <property type="entry name" value="SHS2_FTSA"/>
    <property type="match status" value="1"/>
</dbReference>
<dbReference type="PIRSF" id="PIRSF003101">
    <property type="entry name" value="FtsA"/>
    <property type="match status" value="1"/>
</dbReference>
<dbReference type="SMART" id="SM00842">
    <property type="entry name" value="FtsA"/>
    <property type="match status" value="1"/>
</dbReference>
<dbReference type="SUPFAM" id="SSF53067">
    <property type="entry name" value="Actin-like ATPase domain"/>
    <property type="match status" value="2"/>
</dbReference>
<keyword id="KW-0002">3D-structure</keyword>
<keyword id="KW-0131">Cell cycle</keyword>
<keyword id="KW-0132">Cell division</keyword>
<keyword id="KW-0997">Cell inner membrane</keyword>
<keyword id="KW-1003">Cell membrane</keyword>
<keyword id="KW-0472">Membrane</keyword>
<keyword id="KW-1185">Reference proteome</keyword>
<reference key="1">
    <citation type="journal article" date="1984" name="J. Bacteriol.">
        <title>DNA sequence and transcriptional organization of essential cell division genes ftsQ and ftsA of Escherichia coli: evidence for overlapping transcriptional units.</title>
        <authorList>
            <person name="Robinson A.C."/>
            <person name="Kenan D.J."/>
            <person name="Hatfull G.F."/>
            <person name="Sullivan N.F."/>
            <person name="Spiegelberg R."/>
            <person name="Donachie W.D."/>
        </authorList>
    </citation>
    <scope>NUCLEOTIDE SEQUENCE [GENOMIC DNA]</scope>
    <source>
        <strain>K12</strain>
    </source>
</reference>
<reference key="2">
    <citation type="journal article" date="1985" name="J. Mol. Biol.">
        <title>Structure and expression of the cell division genes ftsQ, ftsA and ftsZ.</title>
        <authorList>
            <person name="Yi Q.-M."/>
            <person name="Rockenbach S."/>
            <person name="Ward J.E. Jr."/>
            <person name="Lutkenhaus J."/>
        </authorList>
    </citation>
    <scope>NUCLEOTIDE SEQUENCE [GENOMIC DNA]</scope>
    <source>
        <strain>K12</strain>
    </source>
</reference>
<reference key="3">
    <citation type="journal article" date="1988" name="Mol. Microbiol.">
        <title>Mapping and characterization of mutants of the Escherichia coli cell division gene, ftsA.</title>
        <authorList>
            <person name="Robinson A.C."/>
            <person name="Begg K.J."/>
            <person name="Sweeney J."/>
            <person name="Condie A."/>
            <person name="Donachie W.D."/>
        </authorList>
    </citation>
    <scope>NUCLEOTIDE SEQUENCE [GENOMIC DNA]</scope>
    <scope>MUTANTS TEMPERATURE-SENSITIVE</scope>
</reference>
<reference key="4">
    <citation type="journal article" date="1992" name="Nucleic Acids Res.">
        <title>Systematic sequencing of the Escherichia coli genome: analysis of the 0-2.4 min region.</title>
        <authorList>
            <person name="Yura T."/>
            <person name="Mori H."/>
            <person name="Nagai H."/>
            <person name="Nagata T."/>
            <person name="Ishihama A."/>
            <person name="Fujita N."/>
            <person name="Isono K."/>
            <person name="Mizobuchi K."/>
            <person name="Nakata A."/>
        </authorList>
    </citation>
    <scope>NUCLEOTIDE SEQUENCE [LARGE SCALE GENOMIC DNA]</scope>
    <source>
        <strain>K12</strain>
    </source>
</reference>
<reference key="5">
    <citation type="journal article" date="1997" name="Science">
        <title>The complete genome sequence of Escherichia coli K-12.</title>
        <authorList>
            <person name="Blattner F.R."/>
            <person name="Plunkett G. III"/>
            <person name="Bloch C.A."/>
            <person name="Perna N.T."/>
            <person name="Burland V."/>
            <person name="Riley M."/>
            <person name="Collado-Vides J."/>
            <person name="Glasner J.D."/>
            <person name="Rode C.K."/>
            <person name="Mayhew G.F."/>
            <person name="Gregor J."/>
            <person name="Davis N.W."/>
            <person name="Kirkpatrick H.A."/>
            <person name="Goeden M.A."/>
            <person name="Rose D.J."/>
            <person name="Mau B."/>
            <person name="Shao Y."/>
        </authorList>
    </citation>
    <scope>NUCLEOTIDE SEQUENCE [LARGE SCALE GENOMIC DNA]</scope>
    <source>
        <strain>K12 / MG1655 / ATCC 47076</strain>
    </source>
</reference>
<reference key="6">
    <citation type="journal article" date="2006" name="Mol. Syst. Biol.">
        <title>Highly accurate genome sequences of Escherichia coli K-12 strains MG1655 and W3110.</title>
        <authorList>
            <person name="Hayashi K."/>
            <person name="Morooka N."/>
            <person name="Yamamoto Y."/>
            <person name="Fujita K."/>
            <person name="Isono K."/>
            <person name="Choi S."/>
            <person name="Ohtsubo E."/>
            <person name="Baba T."/>
            <person name="Wanner B.L."/>
            <person name="Mori H."/>
            <person name="Horiuchi T."/>
        </authorList>
    </citation>
    <scope>NUCLEOTIDE SEQUENCE [LARGE SCALE GENOMIC DNA]</scope>
    <source>
        <strain>K12 / W3110 / ATCC 27325 / DSM 5911</strain>
    </source>
</reference>
<reference key="7">
    <citation type="journal article" date="1990" name="J. Bacteriol.">
        <title>Regulation of expression of the ftsA cell division gene by sequences in upstream genes.</title>
        <authorList>
            <person name="Dewar S.J."/>
            <person name="Donachie W.D."/>
        </authorList>
    </citation>
    <scope>NUCLEOTIDE SEQUENCE [GENOMIC DNA] OF 1-116</scope>
</reference>
<reference key="8">
    <citation type="journal article" date="1985" name="Gene">
        <title>The nucleotide sequence of the essential cell-division gene ftsZ of Escherichia coli.</title>
        <authorList>
            <person name="Yi Q.-M."/>
            <person name="Lutkenhaus J."/>
        </authorList>
    </citation>
    <scope>NUCLEOTIDE SEQUENCE [GENOMIC DNA] OF 318-420</scope>
    <source>
        <strain>K12</strain>
    </source>
</reference>
<reference key="9">
    <citation type="journal article" date="1990" name="J. Bacteriol.">
        <title>The native form of FtsA, a septal protein of Escherichia coli, is located in the cytoplasmic membrane.</title>
        <authorList>
            <person name="Pla J."/>
            <person name="Dopazo A."/>
            <person name="Vicente M."/>
        </authorList>
    </citation>
    <scope>SUBCELLULAR LOCATION</scope>
    <source>
        <strain>K12 / ATCC 35607 / JM83</strain>
    </source>
</reference>
<reference key="10">
    <citation type="journal article" date="1996" name="J. Bacteriol.">
        <title>FtsA is localized to the septum in an FtsZ-dependent manner.</title>
        <authorList>
            <person name="Addinall S.G."/>
            <person name="Lutkenhaus J."/>
        </authorList>
    </citation>
    <scope>SUBCELLULAR LOCATION</scope>
    <source>
        <strain>K12</strain>
    </source>
</reference>
<reference key="11">
    <citation type="journal article" date="1996" name="Proc. Natl. Acad. Sci. U.S.A.">
        <title>Colocalization of cell division proteins FtsZ and FtsA to cytoskeletal structures in living Escherichia coli cells by using green fluorescent protein.</title>
        <authorList>
            <person name="Ma X."/>
            <person name="Ehrhardt D.W."/>
            <person name="Margolin W."/>
        </authorList>
    </citation>
    <scope>SUBCELLULAR LOCATION</scope>
    <scope>INTERACTION WITH FTSZ</scope>
</reference>
<reference key="12">
    <citation type="journal article" date="1997" name="Mol. Microbiol.">
        <title>FtsN, a late recruit to the septum in Escherichia coli.</title>
        <authorList>
            <person name="Addinall S.G."/>
            <person name="Cao C."/>
            <person name="Lutkenhaus J."/>
        </authorList>
    </citation>
    <scope>FUNCTION IN RECRUITMENT OF FTSN</scope>
    <source>
        <strain>K12</strain>
    </source>
</reference>
<reference key="13">
    <citation type="journal article" date="1998" name="J. Bacteriol.">
        <title>Localization of cell division protein FtsK to the Escherichia coli septum and identification of a potential N-terminal targeting domain.</title>
        <authorList>
            <person name="Yu X.C."/>
            <person name="Tran A.H."/>
            <person name="Sun Q."/>
            <person name="Margolin W."/>
        </authorList>
    </citation>
    <scope>FUNCTION IN RECRUITMENT OF FTSK</scope>
    <scope>SUBCELLULAR LOCATION</scope>
</reference>
<reference key="14">
    <citation type="journal article" date="1998" name="J. Bacteriol.">
        <title>FtsI and FtsW are localized to the septum in Escherichia coli.</title>
        <authorList>
            <person name="Wang L."/>
            <person name="Khattar M.K."/>
            <person name="Donachie W.D."/>
            <person name="Lutkenhaus J."/>
        </authorList>
    </citation>
    <scope>FUNCTION IN RECRUITMENT OF FTSI</scope>
</reference>
<reference key="15">
    <citation type="journal article" date="1999" name="J. Bacteriol.">
        <title>Septal localization of FtsQ, an essential cell division protein in Escherichia coli.</title>
        <authorList>
            <person name="Chen J.C."/>
            <person name="Weiss D.S."/>
            <person name="Ghigo J.M."/>
            <person name="Beckwith J."/>
        </authorList>
    </citation>
    <scope>FUNCTION IN RECRUITMENT OF FTSQ</scope>
</reference>
<reference key="16">
    <citation type="journal article" date="1999" name="Mol. Microbiol.">
        <title>Localization of FtsL to the Escherichia coli septal ring.</title>
        <authorList>
            <person name="Ghigo J.M."/>
            <person name="Weiss D.S."/>
            <person name="Chen J.C."/>
            <person name="Yarrow J.C."/>
            <person name="Beckwith J."/>
        </authorList>
    </citation>
    <scope>FUNCTION IN RECRUITMENT OF FTSL</scope>
</reference>
<reference key="17">
    <citation type="journal article" date="2000" name="J. Bacteriol.">
        <title>Role of the carboxy terminus of Escherichia coli FtsA in self-interaction and cell division.</title>
        <authorList>
            <person name="Yim L."/>
            <person name="Vandenbussche G."/>
            <person name="Mingorance J."/>
            <person name="Rueda S."/>
            <person name="Casanova M."/>
            <person name="Ruysschaert J.M."/>
            <person name="Vicente M."/>
        </authorList>
    </citation>
    <scope>FUNCTION</scope>
    <scope>ATP-BINDING</scope>
    <scope>SUBUNIT</scope>
    <scope>DOMAIN</scope>
    <scope>MUTAGENESIS OF ASP-210</scope>
</reference>
<reference key="18">
    <citation type="journal article" date="2002" name="EMBO J.">
        <title>Unique and overlapping roles for ZipA and FtsA in septal ring assembly in Escherichia coli.</title>
        <authorList>
            <person name="Pichoff S."/>
            <person name="Lutkenhaus J."/>
        </authorList>
    </citation>
    <scope>FUNCTION</scope>
</reference>
<reference key="19">
    <citation type="journal article" date="2005" name="Mol. Microbiol.">
        <title>Tethering the Z ring to the membrane through a conserved membrane targeting sequence in FtsA.</title>
        <authorList>
            <person name="Pichoff S."/>
            <person name="Lutkenhaus J."/>
        </authorList>
    </citation>
    <scope>FUNCTION</scope>
    <scope>SUBCELLULAR LOCATION</scope>
    <scope>DOMAIN</scope>
    <scope>MUTAGENESIS OF TRP-408; ILE-409; ARG-411; LEU-412; TRP-415; LEU-416 AND PHE-420</scope>
    <source>
        <strain>K12</strain>
    </source>
</reference>
<reference key="20">
    <citation type="journal article" date="2007" name="Mol. Microbiol.">
        <title>Identification of a region of FtsA required for interaction with FtsZ.</title>
        <authorList>
            <person name="Pichoff S."/>
            <person name="Lutkenhaus J."/>
        </authorList>
    </citation>
    <scope>INTERACTION WITH FTSZ AND SELF-INTERACTION</scope>
</reference>
<reference key="21">
    <citation type="journal article" date="2012" name="J. Bacteriol.">
        <title>The early divisome protein FtsA interacts directly through its 1c subdomain with the cytoplasmic domain of the late divisome protein FtsN.</title>
        <authorList>
            <person name="Busiek K.K."/>
            <person name="Eraso J.M."/>
            <person name="Wang Y."/>
            <person name="Margolin W."/>
        </authorList>
    </citation>
    <scope>INTERACTION WITH FTSN</scope>
</reference>
<reference key="22">
    <citation type="journal article" date="2014" name="Mol. Microbiol.">
        <title>A role for FtsA in SPOR-independent localization of the essential Escherichia coli cell division protein FtsN.</title>
        <authorList>
            <person name="Busiek K.K."/>
            <person name="Margolin W."/>
        </authorList>
    </citation>
    <scope>FUNCTION IN RECRUITMENT OF FTSN</scope>
    <scope>INTERACTION WITH FTSN</scope>
</reference>
<comment type="function">
    <text evidence="2 3 4 5 9 12 13 14 15">Essential cell division protein that assists in the assembly of the Z ring (PubMed:11847116). May serve as the principal membrane anchor for the Z ring (PubMed:15752196). Also required for the recruitment to the septal ring of the downstream cell division proteins FtsK, FtsQ, FtsL, FtsI and FtsN (PubMed:10027987, PubMed:24750258, PubMed:9282742, PubMed:9495771, PubMed:9603865, PubMed:9882666). Binds ATP (PubMed:11053380).</text>
</comment>
<comment type="subunit">
    <text evidence="3 6 8 9 10">Self-interacts (PubMed:11053380, PubMed:17501933). Interacts with FtsZ. This interaction plays an essential role in cell division (PubMed:17501933, PubMed:8917533). Interacts directly with the cytoplasmic region of FtsN (PubMed:22328664, PubMed:24750258).</text>
</comment>
<comment type="interaction">
    <interactant intactId="EBI-550562">
        <id>P0ABH0</id>
    </interactant>
    <interactant intactId="EBI-550562">
        <id>P0ABH0</id>
        <label>ftsA</label>
    </interactant>
    <organismsDiffer>false</organismsDiffer>
    <experiments>4</experiments>
</comment>
<comment type="interaction">
    <interactant intactId="EBI-550562">
        <id>P0ABH0</id>
    </interactant>
    <interactant intactId="EBI-1134233">
        <id>P29131</id>
        <label>ftsN</label>
    </interactant>
    <organismsDiffer>false</organismsDiffer>
    <experiments>7</experiments>
</comment>
<comment type="interaction">
    <interactant intactId="EBI-550562">
        <id>P0ABH0</id>
    </interactant>
    <interactant intactId="EBI-370963">
        <id>P0A9A6</id>
        <label>ftsZ</label>
    </interactant>
    <organismsDiffer>false</organismsDiffer>
    <experiments>8</experiments>
</comment>
<comment type="interaction">
    <interactant intactId="EBI-550562">
        <id>P0ABH0</id>
    </interactant>
    <interactant intactId="EBI-371008">
        <id>P0A9X4</id>
        <label>mreB</label>
    </interactant>
    <organismsDiffer>false</organismsDiffer>
    <experiments>3</experiments>
</comment>
<comment type="interaction">
    <interactant intactId="EBI-550562">
        <id>P0ABH0</id>
    </interactant>
    <interactant intactId="EBI-550623">
        <id>P0ADX7</id>
        <label>yhhA</label>
    </interactant>
    <organismsDiffer>false</organismsDiffer>
    <experiments>3</experiments>
</comment>
<comment type="subcellular location">
    <subcellularLocation>
        <location evidence="5 7">Cell inner membrane</location>
        <topology evidence="5 7">Peripheral membrane protein</topology>
        <orientation evidence="5 7">Cytoplasmic side</orientation>
    </subcellularLocation>
    <text evidence="5 10 11 13">Localizes to the Z ring in an FtsZ-dependent manner (PubMed:8917533, PubMed:8955398, PubMed:9495771). Targeted to the membrane through a conserved C-terminal amphipathic helix (PubMed:15752196).</text>
</comment>
<comment type="domain">
    <text evidence="3 5">The extreme C-terminus is essential for localization to the membrane and the Z ring, self-interaction and activity.</text>
</comment>
<comment type="similarity">
    <text evidence="1 16">Belongs to the FtsA/MreB family.</text>
</comment>
<proteinExistence type="evidence at protein level"/>
<feature type="chain" id="PRO_0000062734" description="Cell division protein FtsA">
    <location>
        <begin position="1"/>
        <end position="420"/>
    </location>
</feature>
<feature type="mutagenesis site" description="Does not bind ATP." evidence="3">
    <original>D</original>
    <variation>A</variation>
    <location>
        <position position="210"/>
    </location>
</feature>
<feature type="mutagenesis site" description="Prevents localization to the Z ring. Lack of activity." evidence="5">
    <original>W</original>
    <variation>E</variation>
    <location>
        <position position="408"/>
    </location>
</feature>
<feature type="mutagenesis site" description="Prevents localization to the Z ring. Lack of activity." evidence="5">
    <original>I</original>
    <variation>E</variation>
    <location>
        <position position="409"/>
    </location>
</feature>
<feature type="mutagenesis site" description="Does not affect localization or function." evidence="5">
    <original>R</original>
    <variation>E</variation>
    <location>
        <position position="411"/>
    </location>
</feature>
<feature type="mutagenesis site" description="Prevents localization to the Z ring. Lack of activity." evidence="5">
    <original>L</original>
    <variation>E</variation>
    <location>
        <position position="412"/>
    </location>
</feature>
<feature type="mutagenesis site" description="Prevents localization to the Z ring. Lack of activity." evidence="5">
    <original>W</original>
    <variation>E</variation>
    <location>
        <position position="415"/>
    </location>
</feature>
<feature type="mutagenesis site" description="Prevents localization to the Z ring. Lack of activity." evidence="5">
    <original>L</original>
    <variation>E</variation>
    <location>
        <position position="416"/>
    </location>
</feature>
<feature type="mutagenesis site" description="Does not affect localization or function." evidence="5">
    <original>F</original>
    <variation>E</variation>
    <location>
        <position position="420"/>
    </location>
</feature>
<feature type="sequence conflict" description="In Ref. 1 and 3." evidence="16" ref="1 3">
    <original>A</original>
    <variation>R</variation>
    <location>
        <position position="339"/>
    </location>
</feature>
<feature type="strand" evidence="17">
    <location>
        <begin position="9"/>
        <end position="15"/>
    </location>
</feature>
<feature type="strand" evidence="17">
    <location>
        <begin position="20"/>
        <end position="27"/>
    </location>
</feature>
<feature type="strand" evidence="17">
    <location>
        <begin position="33"/>
        <end position="41"/>
    </location>
</feature>
<feature type="strand" evidence="17">
    <location>
        <begin position="48"/>
        <end position="52"/>
    </location>
</feature>
<feature type="helix" evidence="17">
    <location>
        <begin position="54"/>
        <end position="72"/>
    </location>
</feature>
<feature type="strand" evidence="17">
    <location>
        <begin position="78"/>
        <end position="83"/>
    </location>
</feature>
<feature type="strand" evidence="17">
    <location>
        <begin position="89"/>
        <end position="98"/>
    </location>
</feature>
<feature type="helix" evidence="17">
    <location>
        <begin position="106"/>
        <end position="117"/>
    </location>
</feature>
<feature type="strand" evidence="17">
    <location>
        <begin position="125"/>
        <end position="137"/>
    </location>
</feature>
<feature type="strand" evidence="17">
    <location>
        <begin position="140"/>
        <end position="144"/>
    </location>
</feature>
<feature type="strand" evidence="17">
    <location>
        <begin position="152"/>
        <end position="166"/>
    </location>
</feature>
<feature type="helix" evidence="17">
    <location>
        <begin position="169"/>
        <end position="177"/>
    </location>
</feature>
<feature type="strand" evidence="17">
    <location>
        <begin position="181"/>
        <end position="187"/>
    </location>
</feature>
<feature type="helix" evidence="17">
    <location>
        <begin position="188"/>
        <end position="196"/>
    </location>
</feature>
<feature type="helix" evidence="17">
    <location>
        <begin position="199"/>
        <end position="204"/>
    </location>
</feature>
<feature type="strand" evidence="17">
    <location>
        <begin position="206"/>
        <end position="211"/>
    </location>
</feature>
<feature type="strand" evidence="17">
    <location>
        <begin position="216"/>
        <end position="222"/>
    </location>
</feature>
<feature type="strand" evidence="17">
    <location>
        <begin position="225"/>
        <end position="233"/>
    </location>
</feature>
<feature type="helix" evidence="17">
    <location>
        <begin position="236"/>
        <end position="247"/>
    </location>
</feature>
<feature type="helix" evidence="17">
    <location>
        <begin position="251"/>
        <end position="261"/>
    </location>
</feature>
<feature type="helix" evidence="17">
    <location>
        <begin position="266"/>
        <end position="268"/>
    </location>
</feature>
<feature type="strand" evidence="17">
    <location>
        <begin position="274"/>
        <end position="278"/>
    </location>
</feature>
<feature type="strand" evidence="17">
    <location>
        <begin position="280"/>
        <end position="282"/>
    </location>
</feature>
<feature type="strand" evidence="17">
    <location>
        <begin position="285"/>
        <end position="289"/>
    </location>
</feature>
<feature type="helix" evidence="17">
    <location>
        <begin position="290"/>
        <end position="321"/>
    </location>
</feature>
<feature type="strand" evidence="17">
    <location>
        <begin position="329"/>
        <end position="336"/>
    </location>
</feature>
<feature type="helix" evidence="17">
    <location>
        <begin position="337"/>
        <end position="340"/>
    </location>
</feature>
<feature type="helix" evidence="17">
    <location>
        <begin position="344"/>
        <end position="352"/>
    </location>
</feature>
<feature type="strand" evidence="17">
    <location>
        <begin position="356"/>
        <end position="358"/>
    </location>
</feature>
<feature type="strand" evidence="17">
    <location>
        <begin position="363"/>
        <end position="367"/>
    </location>
</feature>
<feature type="helix" evidence="17">
    <location>
        <begin position="368"/>
        <end position="371"/>
    </location>
</feature>
<feature type="helix" evidence="17">
    <location>
        <begin position="374"/>
        <end position="376"/>
    </location>
</feature>
<feature type="helix" evidence="17">
    <location>
        <begin position="377"/>
        <end position="386"/>
    </location>
</feature>
<accession>P0ABH0</accession>
<accession>P06137</accession>
<accession>Q47229</accession>
<evidence type="ECO:0000255" key="1">
    <source>
        <dbReference type="HAMAP-Rule" id="MF_02033"/>
    </source>
</evidence>
<evidence type="ECO:0000269" key="2">
    <source>
    </source>
</evidence>
<evidence type="ECO:0000269" key="3">
    <source>
    </source>
</evidence>
<evidence type="ECO:0000269" key="4">
    <source>
    </source>
</evidence>
<evidence type="ECO:0000269" key="5">
    <source>
    </source>
</evidence>
<evidence type="ECO:0000269" key="6">
    <source>
    </source>
</evidence>
<evidence type="ECO:0000269" key="7">
    <source>
    </source>
</evidence>
<evidence type="ECO:0000269" key="8">
    <source>
    </source>
</evidence>
<evidence type="ECO:0000269" key="9">
    <source>
    </source>
</evidence>
<evidence type="ECO:0000269" key="10">
    <source>
    </source>
</evidence>
<evidence type="ECO:0000269" key="11">
    <source>
    </source>
</evidence>
<evidence type="ECO:0000269" key="12">
    <source>
    </source>
</evidence>
<evidence type="ECO:0000269" key="13">
    <source>
    </source>
</evidence>
<evidence type="ECO:0000269" key="14">
    <source>
    </source>
</evidence>
<evidence type="ECO:0000269" key="15">
    <source>
    </source>
</evidence>
<evidence type="ECO:0000305" key="16"/>
<evidence type="ECO:0007829" key="17">
    <source>
        <dbReference type="PDB" id="7Q6D"/>
    </source>
</evidence>
<gene>
    <name evidence="1" type="primary">ftsA</name>
    <name type="synonym">divA</name>
    <name type="ordered locus">b0094</name>
    <name type="ordered locus">JW0092</name>
</gene>